<proteinExistence type="inferred from homology"/>
<sequence length="406" mass="43665">MSQPITRENFDEWMIPVYAPAPFIPVRGEGSRLWDQQGKEYIDFAGGIAVNALGHAHPELREALNEQASKFWHTGNGYTNEPVLRLAKKLIDATFADRVFFCNSGAEANEAALKLARKFAHDRYGSHKSGIVAFKNAFHGRTLFTVSAGGQPAYSQDFAPLPADIRHAAYNDINSASALIDDSTCAVIVEPIQGEGGVVPASNAFLQGLRELCNRHNALLIFDEVQTGVGRTGELYAYMHYGVTPDLLTTAKALGGGFPVGALLATEECARVMTVGTHGTTYGGNPLASAVAGKVLELINTPEMLNGVKQRHDWFVERLNTINHRYGLFSEVRGLGLLIGCVLNADYAGQAKQISQEAAKAGVMVLIAGGNVVRFAPALNVSEEEVTTGLDRFAAACEHFVSRGSS</sequence>
<comment type="function">
    <text evidence="1">Catalyzes the transamination of N(2)-succinylornithine and alpha-ketoglutarate into N(2)-succinylglutamate semialdehyde and glutamate. Can also act as an acetylornithine aminotransferase.</text>
</comment>
<comment type="catalytic activity">
    <reaction evidence="1">
        <text>N(2)-succinyl-L-ornithine + 2-oxoglutarate = N-succinyl-L-glutamate 5-semialdehyde + L-glutamate</text>
        <dbReference type="Rhea" id="RHEA:16953"/>
        <dbReference type="ChEBI" id="CHEBI:16810"/>
        <dbReference type="ChEBI" id="CHEBI:29985"/>
        <dbReference type="ChEBI" id="CHEBI:58514"/>
        <dbReference type="ChEBI" id="CHEBI:58520"/>
        <dbReference type="EC" id="2.6.1.81"/>
    </reaction>
</comment>
<comment type="cofactor">
    <cofactor evidence="1">
        <name>pyridoxal 5'-phosphate</name>
        <dbReference type="ChEBI" id="CHEBI:597326"/>
    </cofactor>
</comment>
<comment type="pathway">
    <text evidence="1">Amino-acid degradation; L-arginine degradation via AST pathway; L-glutamate and succinate from L-arginine: step 3/5.</text>
</comment>
<comment type="similarity">
    <text evidence="1">Belongs to the class-III pyridoxal-phosphate-dependent aminotransferase family. AstC subfamily.</text>
</comment>
<accession>B6IBG8</accession>
<dbReference type="EC" id="2.6.1.81" evidence="1"/>
<dbReference type="EMBL" id="AP009240">
    <property type="protein sequence ID" value="BAG77442.1"/>
    <property type="molecule type" value="Genomic_DNA"/>
</dbReference>
<dbReference type="RefSeq" id="WP_000081983.1">
    <property type="nucleotide sequence ID" value="NC_011415.1"/>
</dbReference>
<dbReference type="SMR" id="B6IBG8"/>
<dbReference type="GeneID" id="75203054"/>
<dbReference type="KEGG" id="ecy:ECSE_1918"/>
<dbReference type="HOGENOM" id="CLU_016922_10_1_6"/>
<dbReference type="UniPathway" id="UPA00185">
    <property type="reaction ID" value="UER00281"/>
</dbReference>
<dbReference type="Proteomes" id="UP000008199">
    <property type="component" value="Chromosome"/>
</dbReference>
<dbReference type="GO" id="GO:0042802">
    <property type="term" value="F:identical protein binding"/>
    <property type="evidence" value="ECO:0007669"/>
    <property type="project" value="TreeGrafter"/>
</dbReference>
<dbReference type="GO" id="GO:0030170">
    <property type="term" value="F:pyridoxal phosphate binding"/>
    <property type="evidence" value="ECO:0007669"/>
    <property type="project" value="UniProtKB-UniRule"/>
</dbReference>
<dbReference type="GO" id="GO:0043825">
    <property type="term" value="F:succinylornithine transaminase activity"/>
    <property type="evidence" value="ECO:0007669"/>
    <property type="project" value="UniProtKB-EC"/>
</dbReference>
<dbReference type="GO" id="GO:1901607">
    <property type="term" value="P:alpha-amino acid biosynthetic process"/>
    <property type="evidence" value="ECO:0007669"/>
    <property type="project" value="UniProtKB-ARBA"/>
</dbReference>
<dbReference type="GO" id="GO:0019544">
    <property type="term" value="P:arginine catabolic process to glutamate"/>
    <property type="evidence" value="ECO:0007669"/>
    <property type="project" value="UniProtKB-UniRule"/>
</dbReference>
<dbReference type="GO" id="GO:0019545">
    <property type="term" value="P:arginine catabolic process to succinate"/>
    <property type="evidence" value="ECO:0007669"/>
    <property type="project" value="UniProtKB-UniRule"/>
</dbReference>
<dbReference type="GO" id="GO:0006593">
    <property type="term" value="P:ornithine catabolic process"/>
    <property type="evidence" value="ECO:0007669"/>
    <property type="project" value="InterPro"/>
</dbReference>
<dbReference type="CDD" id="cd00610">
    <property type="entry name" value="OAT_like"/>
    <property type="match status" value="1"/>
</dbReference>
<dbReference type="FunFam" id="3.40.640.10:FF:000004">
    <property type="entry name" value="Acetylornithine aminotransferase"/>
    <property type="match status" value="1"/>
</dbReference>
<dbReference type="FunFam" id="3.90.1150.10:FF:000009">
    <property type="entry name" value="Succinylornithine transaminase"/>
    <property type="match status" value="1"/>
</dbReference>
<dbReference type="Gene3D" id="3.90.1150.10">
    <property type="entry name" value="Aspartate Aminotransferase, domain 1"/>
    <property type="match status" value="1"/>
</dbReference>
<dbReference type="Gene3D" id="3.40.640.10">
    <property type="entry name" value="Type I PLP-dependent aspartate aminotransferase-like (Major domain)"/>
    <property type="match status" value="1"/>
</dbReference>
<dbReference type="HAMAP" id="MF_01107">
    <property type="entry name" value="ArgD_aminotrans_3"/>
    <property type="match status" value="1"/>
</dbReference>
<dbReference type="HAMAP" id="MF_01173">
    <property type="entry name" value="AstC_aminotrans_3"/>
    <property type="match status" value="1"/>
</dbReference>
<dbReference type="InterPro" id="IPR017652">
    <property type="entry name" value="Ac/SucOrn_transaminase_bac"/>
</dbReference>
<dbReference type="InterPro" id="IPR004636">
    <property type="entry name" value="AcOrn/SuccOrn_fam"/>
</dbReference>
<dbReference type="InterPro" id="IPR005814">
    <property type="entry name" value="Aminotrans_3"/>
</dbReference>
<dbReference type="InterPro" id="IPR049704">
    <property type="entry name" value="Aminotrans_3_PPA_site"/>
</dbReference>
<dbReference type="InterPro" id="IPR050103">
    <property type="entry name" value="Class-III_PLP-dep_AT"/>
</dbReference>
<dbReference type="InterPro" id="IPR015424">
    <property type="entry name" value="PyrdxlP-dep_Trfase"/>
</dbReference>
<dbReference type="InterPro" id="IPR015421">
    <property type="entry name" value="PyrdxlP-dep_Trfase_major"/>
</dbReference>
<dbReference type="InterPro" id="IPR015422">
    <property type="entry name" value="PyrdxlP-dep_Trfase_small"/>
</dbReference>
<dbReference type="InterPro" id="IPR026330">
    <property type="entry name" value="SOAT"/>
</dbReference>
<dbReference type="NCBIfam" id="TIGR03246">
    <property type="entry name" value="arg_catab_astC"/>
    <property type="match status" value="1"/>
</dbReference>
<dbReference type="NCBIfam" id="TIGR00707">
    <property type="entry name" value="argD"/>
    <property type="match status" value="1"/>
</dbReference>
<dbReference type="NCBIfam" id="NF002325">
    <property type="entry name" value="PRK01278.1"/>
    <property type="match status" value="1"/>
</dbReference>
<dbReference type="NCBIfam" id="NF003468">
    <property type="entry name" value="PRK05093.1"/>
    <property type="match status" value="1"/>
</dbReference>
<dbReference type="NCBIfam" id="NF009047">
    <property type="entry name" value="PRK12381.1"/>
    <property type="match status" value="1"/>
</dbReference>
<dbReference type="PANTHER" id="PTHR11986">
    <property type="entry name" value="AMINOTRANSFERASE CLASS III"/>
    <property type="match status" value="1"/>
</dbReference>
<dbReference type="PANTHER" id="PTHR11986:SF113">
    <property type="entry name" value="SUCCINYLORNITHINE TRANSAMINASE"/>
    <property type="match status" value="1"/>
</dbReference>
<dbReference type="Pfam" id="PF00202">
    <property type="entry name" value="Aminotran_3"/>
    <property type="match status" value="1"/>
</dbReference>
<dbReference type="PIRSF" id="PIRSF000521">
    <property type="entry name" value="Transaminase_4ab_Lys_Orn"/>
    <property type="match status" value="1"/>
</dbReference>
<dbReference type="SUPFAM" id="SSF53383">
    <property type="entry name" value="PLP-dependent transferases"/>
    <property type="match status" value="1"/>
</dbReference>
<dbReference type="PROSITE" id="PS00600">
    <property type="entry name" value="AA_TRANSFER_CLASS_3"/>
    <property type="match status" value="1"/>
</dbReference>
<organism>
    <name type="scientific">Escherichia coli (strain SE11)</name>
    <dbReference type="NCBI Taxonomy" id="409438"/>
    <lineage>
        <taxon>Bacteria</taxon>
        <taxon>Pseudomonadati</taxon>
        <taxon>Pseudomonadota</taxon>
        <taxon>Gammaproteobacteria</taxon>
        <taxon>Enterobacterales</taxon>
        <taxon>Enterobacteriaceae</taxon>
        <taxon>Escherichia</taxon>
    </lineage>
</organism>
<evidence type="ECO:0000255" key="1">
    <source>
        <dbReference type="HAMAP-Rule" id="MF_01173"/>
    </source>
</evidence>
<name>ASTC_ECOSE</name>
<feature type="chain" id="PRO_1000164386" description="Succinylornithine transaminase">
    <location>
        <begin position="1"/>
        <end position="406"/>
    </location>
</feature>
<feature type="modified residue" description="N6-(pyridoxal phosphate)lysine" evidence="1">
    <location>
        <position position="252"/>
    </location>
</feature>
<gene>
    <name evidence="1" type="primary">astC</name>
    <name evidence="1" type="synonym">argM</name>
    <name type="ordered locus">ECSE_1918</name>
</gene>
<protein>
    <recommendedName>
        <fullName evidence="1">Succinylornithine transaminase</fullName>
        <ecNumber evidence="1">2.6.1.81</ecNumber>
    </recommendedName>
    <alternativeName>
        <fullName evidence="1">Succinylornithine aminotransferase</fullName>
    </alternativeName>
</protein>
<keyword id="KW-0032">Aminotransferase</keyword>
<keyword id="KW-0056">Arginine metabolism</keyword>
<keyword id="KW-0663">Pyridoxal phosphate</keyword>
<keyword id="KW-0808">Transferase</keyword>
<reference key="1">
    <citation type="journal article" date="2008" name="DNA Res.">
        <title>Complete genome sequence and comparative analysis of the wild-type commensal Escherichia coli strain SE11 isolated from a healthy adult.</title>
        <authorList>
            <person name="Oshima K."/>
            <person name="Toh H."/>
            <person name="Ogura Y."/>
            <person name="Sasamoto H."/>
            <person name="Morita H."/>
            <person name="Park S.-H."/>
            <person name="Ooka T."/>
            <person name="Iyoda S."/>
            <person name="Taylor T.D."/>
            <person name="Hayashi T."/>
            <person name="Itoh K."/>
            <person name="Hattori M."/>
        </authorList>
    </citation>
    <scope>NUCLEOTIDE SEQUENCE [LARGE SCALE GENOMIC DNA]</scope>
    <source>
        <strain>SE11</strain>
    </source>
</reference>